<organism>
    <name type="scientific">Desulfitobacterium hafniense (strain Y51)</name>
    <dbReference type="NCBI Taxonomy" id="138119"/>
    <lineage>
        <taxon>Bacteria</taxon>
        <taxon>Bacillati</taxon>
        <taxon>Bacillota</taxon>
        <taxon>Clostridia</taxon>
        <taxon>Eubacteriales</taxon>
        <taxon>Desulfitobacteriaceae</taxon>
        <taxon>Desulfitobacterium</taxon>
    </lineage>
</organism>
<evidence type="ECO:0000255" key="1">
    <source>
        <dbReference type="HAMAP-Rule" id="MF_00444"/>
    </source>
</evidence>
<reference key="1">
    <citation type="journal article" date="2006" name="J. Bacteriol.">
        <title>Complete genome sequence of the dehalorespiring bacterium Desulfitobacterium hafniense Y51 and comparison with Dehalococcoides ethenogenes 195.</title>
        <authorList>
            <person name="Nonaka H."/>
            <person name="Keresztes G."/>
            <person name="Shinoda Y."/>
            <person name="Ikenaga Y."/>
            <person name="Abe M."/>
            <person name="Naito K."/>
            <person name="Inatomi K."/>
            <person name="Furukawa K."/>
            <person name="Inui M."/>
            <person name="Yukawa H."/>
        </authorList>
    </citation>
    <scope>NUCLEOTIDE SEQUENCE [LARGE SCALE GENOMIC DNA]</scope>
    <source>
        <strain>Y51</strain>
    </source>
</reference>
<keyword id="KW-0963">Cytoplasm</keyword>
<keyword id="KW-0378">Hydrolase</keyword>
<keyword id="KW-0645">Protease</keyword>
<keyword id="KW-1185">Reference proteome</keyword>
<keyword id="KW-0720">Serine protease</keyword>
<name>CLPP2_DESHY</name>
<gene>
    <name evidence="1" type="primary">clpP2</name>
    <name type="ordered locus">DSY3354</name>
</gene>
<comment type="function">
    <text evidence="1">Cleaves peptides in various proteins in a process that requires ATP hydrolysis. Has a chymotrypsin-like activity. Plays a major role in the degradation of misfolded proteins.</text>
</comment>
<comment type="catalytic activity">
    <reaction evidence="1">
        <text>Hydrolysis of proteins to small peptides in the presence of ATP and magnesium. alpha-casein is the usual test substrate. In the absence of ATP, only oligopeptides shorter than five residues are hydrolyzed (such as succinyl-Leu-Tyr-|-NHMec, and Leu-Tyr-Leu-|-Tyr-Trp, in which cleavage of the -Tyr-|-Leu- and -Tyr-|-Trp bonds also occurs).</text>
        <dbReference type="EC" id="3.4.21.92"/>
    </reaction>
</comment>
<comment type="subunit">
    <text evidence="1">Fourteen ClpP subunits assemble into 2 heptameric rings which stack back to back to give a disk-like structure with a central cavity, resembling the structure of eukaryotic proteasomes.</text>
</comment>
<comment type="subcellular location">
    <subcellularLocation>
        <location evidence="1">Cytoplasm</location>
    </subcellularLocation>
</comment>
<comment type="similarity">
    <text evidence="1">Belongs to the peptidase S14 family.</text>
</comment>
<accession>Q24S49</accession>
<sequence>MSYLVPMVIEQTNRGERSYDIYSRLLKDRIIFLGGPVTDDVANLVVAQMLFLEAEDPEKDIFLYINSPGGSISAGMAIYDTMQYIRADVHTICVGLAASMGAFLLTAGAKGKRQALPNAEILIHQPLIGGGGISGQATEIEIHAKHLLRVKERMNRILAERTGQTIERIEADTDRDRYMTAEEAKEYGLIDEVLEKPNQPKK</sequence>
<proteinExistence type="inferred from homology"/>
<feature type="chain" id="PRO_0000252815" description="ATP-dependent Clp protease proteolytic subunit 2">
    <location>
        <begin position="1"/>
        <end position="202"/>
    </location>
</feature>
<feature type="active site" description="Nucleophile" evidence="1">
    <location>
        <position position="99"/>
    </location>
</feature>
<feature type="active site" evidence="1">
    <location>
        <position position="124"/>
    </location>
</feature>
<protein>
    <recommendedName>
        <fullName evidence="1">ATP-dependent Clp protease proteolytic subunit 2</fullName>
        <ecNumber evidence="1">3.4.21.92</ecNumber>
    </recommendedName>
    <alternativeName>
        <fullName evidence="1">Endopeptidase Clp 2</fullName>
    </alternativeName>
</protein>
<dbReference type="EC" id="3.4.21.92" evidence="1"/>
<dbReference type="EMBL" id="AP008230">
    <property type="protein sequence ID" value="BAE85143.1"/>
    <property type="molecule type" value="Genomic_DNA"/>
</dbReference>
<dbReference type="SMR" id="Q24S49"/>
<dbReference type="STRING" id="138119.DSY3354"/>
<dbReference type="MEROPS" id="S14.001"/>
<dbReference type="KEGG" id="dsy:DSY3354"/>
<dbReference type="eggNOG" id="COG0740">
    <property type="taxonomic scope" value="Bacteria"/>
</dbReference>
<dbReference type="HOGENOM" id="CLU_058707_3_2_9"/>
<dbReference type="Proteomes" id="UP000001946">
    <property type="component" value="Chromosome"/>
</dbReference>
<dbReference type="GO" id="GO:0005737">
    <property type="term" value="C:cytoplasm"/>
    <property type="evidence" value="ECO:0007669"/>
    <property type="project" value="UniProtKB-SubCell"/>
</dbReference>
<dbReference type="GO" id="GO:0009368">
    <property type="term" value="C:endopeptidase Clp complex"/>
    <property type="evidence" value="ECO:0007669"/>
    <property type="project" value="TreeGrafter"/>
</dbReference>
<dbReference type="GO" id="GO:0004176">
    <property type="term" value="F:ATP-dependent peptidase activity"/>
    <property type="evidence" value="ECO:0007669"/>
    <property type="project" value="InterPro"/>
</dbReference>
<dbReference type="GO" id="GO:0051117">
    <property type="term" value="F:ATPase binding"/>
    <property type="evidence" value="ECO:0007669"/>
    <property type="project" value="TreeGrafter"/>
</dbReference>
<dbReference type="GO" id="GO:0004252">
    <property type="term" value="F:serine-type endopeptidase activity"/>
    <property type="evidence" value="ECO:0007669"/>
    <property type="project" value="UniProtKB-UniRule"/>
</dbReference>
<dbReference type="GO" id="GO:0006515">
    <property type="term" value="P:protein quality control for misfolded or incompletely synthesized proteins"/>
    <property type="evidence" value="ECO:0007669"/>
    <property type="project" value="TreeGrafter"/>
</dbReference>
<dbReference type="CDD" id="cd07017">
    <property type="entry name" value="S14_ClpP_2"/>
    <property type="match status" value="1"/>
</dbReference>
<dbReference type="FunFam" id="3.90.226.10:FF:000001">
    <property type="entry name" value="ATP-dependent Clp protease proteolytic subunit"/>
    <property type="match status" value="1"/>
</dbReference>
<dbReference type="Gene3D" id="3.90.226.10">
    <property type="entry name" value="2-enoyl-CoA Hydratase, Chain A, domain 1"/>
    <property type="match status" value="1"/>
</dbReference>
<dbReference type="HAMAP" id="MF_00444">
    <property type="entry name" value="ClpP"/>
    <property type="match status" value="1"/>
</dbReference>
<dbReference type="InterPro" id="IPR001907">
    <property type="entry name" value="ClpP"/>
</dbReference>
<dbReference type="InterPro" id="IPR029045">
    <property type="entry name" value="ClpP/crotonase-like_dom_sf"/>
</dbReference>
<dbReference type="InterPro" id="IPR023562">
    <property type="entry name" value="ClpP/TepA"/>
</dbReference>
<dbReference type="InterPro" id="IPR033135">
    <property type="entry name" value="ClpP_His_AS"/>
</dbReference>
<dbReference type="InterPro" id="IPR018215">
    <property type="entry name" value="ClpP_Ser_AS"/>
</dbReference>
<dbReference type="NCBIfam" id="TIGR00493">
    <property type="entry name" value="clpP"/>
    <property type="match status" value="1"/>
</dbReference>
<dbReference type="NCBIfam" id="NF001368">
    <property type="entry name" value="PRK00277.1"/>
    <property type="match status" value="1"/>
</dbReference>
<dbReference type="NCBIfam" id="NF009205">
    <property type="entry name" value="PRK12553.1"/>
    <property type="match status" value="1"/>
</dbReference>
<dbReference type="PANTHER" id="PTHR10381">
    <property type="entry name" value="ATP-DEPENDENT CLP PROTEASE PROTEOLYTIC SUBUNIT"/>
    <property type="match status" value="1"/>
</dbReference>
<dbReference type="PANTHER" id="PTHR10381:SF70">
    <property type="entry name" value="ATP-DEPENDENT CLP PROTEASE PROTEOLYTIC SUBUNIT"/>
    <property type="match status" value="1"/>
</dbReference>
<dbReference type="Pfam" id="PF00574">
    <property type="entry name" value="CLP_protease"/>
    <property type="match status" value="1"/>
</dbReference>
<dbReference type="PRINTS" id="PR00127">
    <property type="entry name" value="CLPPROTEASEP"/>
</dbReference>
<dbReference type="SUPFAM" id="SSF52096">
    <property type="entry name" value="ClpP/crotonase"/>
    <property type="match status" value="1"/>
</dbReference>
<dbReference type="PROSITE" id="PS00382">
    <property type="entry name" value="CLP_PROTEASE_HIS"/>
    <property type="match status" value="1"/>
</dbReference>
<dbReference type="PROSITE" id="PS00381">
    <property type="entry name" value="CLP_PROTEASE_SER"/>
    <property type="match status" value="1"/>
</dbReference>